<name>TREA_ECO45</name>
<evidence type="ECO:0000255" key="1">
    <source>
        <dbReference type="HAMAP-Rule" id="MF_01060"/>
    </source>
</evidence>
<evidence type="ECO:0000256" key="2">
    <source>
        <dbReference type="SAM" id="MobiDB-lite"/>
    </source>
</evidence>
<reference key="1">
    <citation type="journal article" date="2009" name="PLoS Genet.">
        <title>Organised genome dynamics in the Escherichia coli species results in highly diverse adaptive paths.</title>
        <authorList>
            <person name="Touchon M."/>
            <person name="Hoede C."/>
            <person name="Tenaillon O."/>
            <person name="Barbe V."/>
            <person name="Baeriswyl S."/>
            <person name="Bidet P."/>
            <person name="Bingen E."/>
            <person name="Bonacorsi S."/>
            <person name="Bouchier C."/>
            <person name="Bouvet O."/>
            <person name="Calteau A."/>
            <person name="Chiapello H."/>
            <person name="Clermont O."/>
            <person name="Cruveiller S."/>
            <person name="Danchin A."/>
            <person name="Diard M."/>
            <person name="Dossat C."/>
            <person name="Karoui M.E."/>
            <person name="Frapy E."/>
            <person name="Garry L."/>
            <person name="Ghigo J.M."/>
            <person name="Gilles A.M."/>
            <person name="Johnson J."/>
            <person name="Le Bouguenec C."/>
            <person name="Lescat M."/>
            <person name="Mangenot S."/>
            <person name="Martinez-Jehanne V."/>
            <person name="Matic I."/>
            <person name="Nassif X."/>
            <person name="Oztas S."/>
            <person name="Petit M.A."/>
            <person name="Pichon C."/>
            <person name="Rouy Z."/>
            <person name="Ruf C.S."/>
            <person name="Schneider D."/>
            <person name="Tourret J."/>
            <person name="Vacherie B."/>
            <person name="Vallenet D."/>
            <person name="Medigue C."/>
            <person name="Rocha E.P.C."/>
            <person name="Denamur E."/>
        </authorList>
    </citation>
    <scope>NUCLEOTIDE SEQUENCE [LARGE SCALE GENOMIC DNA]</scope>
    <source>
        <strain>S88 / ExPEC</strain>
    </source>
</reference>
<dbReference type="EC" id="3.2.1.28" evidence="1"/>
<dbReference type="EMBL" id="CU928161">
    <property type="protein sequence ID" value="CAR02591.1"/>
    <property type="molecule type" value="Genomic_DNA"/>
</dbReference>
<dbReference type="RefSeq" id="WP_000841739.1">
    <property type="nucleotide sequence ID" value="NC_011742.1"/>
</dbReference>
<dbReference type="SMR" id="B7MK99"/>
<dbReference type="CAZy" id="GH37">
    <property type="family name" value="Glycoside Hydrolase Family 37"/>
</dbReference>
<dbReference type="KEGG" id="ecz:ECS88_1265"/>
<dbReference type="HOGENOM" id="CLU_006451_3_1_6"/>
<dbReference type="Proteomes" id="UP000000747">
    <property type="component" value="Chromosome"/>
</dbReference>
<dbReference type="GO" id="GO:0042597">
    <property type="term" value="C:periplasmic space"/>
    <property type="evidence" value="ECO:0007669"/>
    <property type="project" value="UniProtKB-SubCell"/>
</dbReference>
<dbReference type="GO" id="GO:0004555">
    <property type="term" value="F:alpha,alpha-trehalase activity"/>
    <property type="evidence" value="ECO:0007669"/>
    <property type="project" value="UniProtKB-UniRule"/>
</dbReference>
<dbReference type="GO" id="GO:0071474">
    <property type="term" value="P:cellular hyperosmotic response"/>
    <property type="evidence" value="ECO:0007669"/>
    <property type="project" value="InterPro"/>
</dbReference>
<dbReference type="GO" id="GO:0005993">
    <property type="term" value="P:trehalose catabolic process"/>
    <property type="evidence" value="ECO:0007669"/>
    <property type="project" value="InterPro"/>
</dbReference>
<dbReference type="FunFam" id="1.50.10.10:FF:000003">
    <property type="entry name" value="Cytoplasmic trehalase"/>
    <property type="match status" value="1"/>
</dbReference>
<dbReference type="Gene3D" id="1.50.10.10">
    <property type="match status" value="1"/>
</dbReference>
<dbReference type="HAMAP" id="MF_01060">
    <property type="entry name" value="Peripl_trehalase"/>
    <property type="match status" value="1"/>
</dbReference>
<dbReference type="InterPro" id="IPR008928">
    <property type="entry name" value="6-hairpin_glycosidase_sf"/>
</dbReference>
<dbReference type="InterPro" id="IPR012341">
    <property type="entry name" value="6hp_glycosidase-like_sf"/>
</dbReference>
<dbReference type="InterPro" id="IPR001661">
    <property type="entry name" value="Glyco_hydro_37"/>
</dbReference>
<dbReference type="InterPro" id="IPR018232">
    <property type="entry name" value="Glyco_hydro_37_CS"/>
</dbReference>
<dbReference type="InterPro" id="IPR023720">
    <property type="entry name" value="Trehalase_periplasmic"/>
</dbReference>
<dbReference type="NCBIfam" id="NF009773">
    <property type="entry name" value="PRK13270.1"/>
    <property type="match status" value="1"/>
</dbReference>
<dbReference type="NCBIfam" id="NF009774">
    <property type="entry name" value="PRK13271.1"/>
    <property type="match status" value="1"/>
</dbReference>
<dbReference type="PANTHER" id="PTHR23403">
    <property type="entry name" value="TREHALASE"/>
    <property type="match status" value="1"/>
</dbReference>
<dbReference type="PANTHER" id="PTHR23403:SF1">
    <property type="entry name" value="TREHALASE"/>
    <property type="match status" value="1"/>
</dbReference>
<dbReference type="Pfam" id="PF01204">
    <property type="entry name" value="Trehalase"/>
    <property type="match status" value="1"/>
</dbReference>
<dbReference type="PRINTS" id="PR00744">
    <property type="entry name" value="GLHYDRLASE37"/>
</dbReference>
<dbReference type="SUPFAM" id="SSF48208">
    <property type="entry name" value="Six-hairpin glycosidases"/>
    <property type="match status" value="1"/>
</dbReference>
<dbReference type="PROSITE" id="PS00927">
    <property type="entry name" value="TREHALASE_1"/>
    <property type="match status" value="1"/>
</dbReference>
<dbReference type="PROSITE" id="PS00928">
    <property type="entry name" value="TREHALASE_2"/>
    <property type="match status" value="1"/>
</dbReference>
<organism>
    <name type="scientific">Escherichia coli O45:K1 (strain S88 / ExPEC)</name>
    <dbReference type="NCBI Taxonomy" id="585035"/>
    <lineage>
        <taxon>Bacteria</taxon>
        <taxon>Pseudomonadati</taxon>
        <taxon>Pseudomonadota</taxon>
        <taxon>Gammaproteobacteria</taxon>
        <taxon>Enterobacterales</taxon>
        <taxon>Enterobacteriaceae</taxon>
        <taxon>Escherichia</taxon>
    </lineage>
</organism>
<comment type="function">
    <text evidence="1">Provides the cells with the ability to utilize trehalose at high osmolarity by splitting it into glucose molecules that can subsequently be taken up by the phosphotransferase-mediated uptake system.</text>
</comment>
<comment type="catalytic activity">
    <reaction evidence="1">
        <text>alpha,alpha-trehalose + H2O = alpha-D-glucose + beta-D-glucose</text>
        <dbReference type="Rhea" id="RHEA:32675"/>
        <dbReference type="ChEBI" id="CHEBI:15377"/>
        <dbReference type="ChEBI" id="CHEBI:15903"/>
        <dbReference type="ChEBI" id="CHEBI:16551"/>
        <dbReference type="ChEBI" id="CHEBI:17925"/>
        <dbReference type="EC" id="3.2.1.28"/>
    </reaction>
</comment>
<comment type="subunit">
    <text evidence="1">Monomer.</text>
</comment>
<comment type="subcellular location">
    <subcellularLocation>
        <location evidence="1">Periplasm</location>
    </subcellularLocation>
</comment>
<comment type="similarity">
    <text evidence="1">Belongs to the glycosyl hydrolase 37 family.</text>
</comment>
<proteinExistence type="inferred from homology"/>
<protein>
    <recommendedName>
        <fullName evidence="1">Periplasmic trehalase</fullName>
        <ecNumber evidence="1">3.2.1.28</ecNumber>
    </recommendedName>
    <alternativeName>
        <fullName evidence="1">Alpha,alpha-trehalase</fullName>
    </alternativeName>
    <alternativeName>
        <fullName evidence="1">Alpha,alpha-trehalose glucohydrolase</fullName>
    </alternativeName>
</protein>
<accession>B7MK99</accession>
<feature type="signal peptide" evidence="1">
    <location>
        <begin position="1"/>
        <end position="30"/>
    </location>
</feature>
<feature type="chain" id="PRO_1000136416" description="Periplasmic trehalase">
    <location>
        <begin position="31"/>
        <end position="565"/>
    </location>
</feature>
<feature type="region of interest" description="Disordered" evidence="2">
    <location>
        <begin position="539"/>
        <end position="565"/>
    </location>
</feature>
<feature type="active site" description="Proton donor/acceptor" evidence="1">
    <location>
        <position position="312"/>
    </location>
</feature>
<feature type="active site" description="Proton donor/acceptor" evidence="1">
    <location>
        <position position="496"/>
    </location>
</feature>
<feature type="binding site" evidence="1">
    <location>
        <position position="152"/>
    </location>
    <ligand>
        <name>substrate</name>
    </ligand>
</feature>
<feature type="binding site" evidence="1">
    <location>
        <begin position="159"/>
        <end position="160"/>
    </location>
    <ligand>
        <name>substrate</name>
    </ligand>
</feature>
<feature type="binding site" evidence="1">
    <location>
        <position position="196"/>
    </location>
    <ligand>
        <name>substrate</name>
    </ligand>
</feature>
<feature type="binding site" evidence="1">
    <location>
        <begin position="205"/>
        <end position="207"/>
    </location>
    <ligand>
        <name>substrate</name>
    </ligand>
</feature>
<feature type="binding site" evidence="1">
    <location>
        <begin position="277"/>
        <end position="279"/>
    </location>
    <ligand>
        <name>substrate</name>
    </ligand>
</feature>
<feature type="binding site" evidence="1">
    <location>
        <position position="310"/>
    </location>
    <ligand>
        <name>substrate</name>
    </ligand>
</feature>
<feature type="binding site" evidence="1">
    <location>
        <position position="511"/>
    </location>
    <ligand>
        <name>substrate</name>
    </ligand>
</feature>
<keyword id="KW-0326">Glycosidase</keyword>
<keyword id="KW-0378">Hydrolase</keyword>
<keyword id="KW-0574">Periplasm</keyword>
<keyword id="KW-1185">Reference proteome</keyword>
<keyword id="KW-0732">Signal</keyword>
<gene>
    <name evidence="1" type="primary">treA</name>
    <name type="ordered locus">ECS88_1265</name>
</gene>
<sequence length="565" mass="63766">MKSPAPSRPQKMALIPACIFLCFAALSVQAEETSVTPQPPDILLGPLFNDVQNAKLFPDQKTFADAVPNSDPLMILADYRMQQNQSGFDLRHFVNVNFTLPKEGEKYVPPEGQSLREHIDGLWPVLTRSTENTEKWDSLLPLPKPYVVPGGRFREVYYWDSYFTMLGLAESGHWDKVADMVANFAHEIDNYGHIPNGNRSYYLSRSQPPFFALMVELLAQHEGDAALKQYLPQMQKEYAYWMDGVENLQAGQQEKRVVKLQDGTLLNRYWDDRDTPRPESWVEDIATAKSNPNRPATEIYRDLRSAAASGWDFSSRWMDNPQQLNTLRTTSIVPVDLNSLMFKMEKILARASKAIGDNAMANQYETLANARQKGIEKYLWNDQQGWYADYDLKSHKVRNQLTAAALFPLYVNAAAKDRASKMATATKTHLLQPGGLNTTSVKSGQQWDAPNGWAPLQWVATEGLQNYGQKEVAMDISWHFLTNVQHTYDREKKLVEKYDVSTTGTGGGGGEYPLQDGFGWTNGVTLKMLDLICPKEQPCDNVPATRPLSESTTQPLKQKEAEPTP</sequence>